<evidence type="ECO:0000250" key="1">
    <source>
        <dbReference type="UniProtKB" id="Q9Y5S9"/>
    </source>
</evidence>
<evidence type="ECO:0000255" key="2">
    <source>
        <dbReference type="PROSITE-ProRule" id="PRU00176"/>
    </source>
</evidence>
<evidence type="ECO:0000256" key="3">
    <source>
        <dbReference type="SAM" id="MobiDB-lite"/>
    </source>
</evidence>
<evidence type="ECO:0000305" key="4"/>
<gene>
    <name type="primary">rbm8a</name>
    <name type="synonym">rbm8</name>
</gene>
<proteinExistence type="evidence at transcript level"/>
<comment type="function">
    <text evidence="1">Required for pre-mRNA splicing as component of the spliceosome (By similarity). Core component of the splicing-dependent multiprotein exon junction complex (EJC) deposited at splice junctions on mRNAs. The EJC is a dynamic structure consisting of core proteins and several peripheral nuclear and cytoplasmic associated factors that join the complex only transiently either during EJC assembly or during subsequent mRNA metabolism. The EJC marks the position of the exon-exon junction in the mature mRNA for the gene expression machinery and the core components remain bound to spliced mRNAs throughout all stages of mRNA metabolism thereby influencing downstream processes including nuclear mRNA export, subcellular mRNA localization, translation efficiency and nonsense-mediated mRNA decay (NMD). Its removal from cytoplasmic mRNAs requires translation initiation from EJC-bearing spliced mRNAs. Associates preferentially with mRNAs produced by splicing. Does not interact with pre-mRNAs, introns, or mRNAs produced from intronless cDNAs. Associates with both nuclear mRNAs and newly exported cytoplasmic mRNAs (By similarity).</text>
</comment>
<comment type="subunit">
    <text evidence="1">Part of the mRNA splicing-dependent exon junction complex (EJC) complex; the core complex contains casc3, eif4a3, magoh, and rbm8a. Identified in the spliceosome C complex. Associates with polysomes.</text>
</comment>
<comment type="subcellular location">
    <subcellularLocation>
        <location evidence="1">Nucleus</location>
    </subcellularLocation>
    <subcellularLocation>
        <location evidence="1">Nucleus speckle</location>
    </subcellularLocation>
    <subcellularLocation>
        <location evidence="1">Cytoplasm</location>
    </subcellularLocation>
    <text evidence="1">Nucleocytoplasmic shuttling protein. Travels to the cytoplasm as part of the exon junction complex (EJC) bound to mRNA.</text>
</comment>
<comment type="similarity">
    <text evidence="4">Belongs to the RBM8A family.</text>
</comment>
<accession>B5DGI7</accession>
<accession>B9EPG0</accession>
<sequence length="175" mass="19898">MADVLDLHEAGGEDFAMDEDGDDSIHKLKEKAKRRKGRGFGSEEGARSRVREDYDTVEQDGDEPGPQRSVEGWILFVTGVHEEATEEDIHDKFAEFGEIKNLHLNLDRRTGYLKGYALVEYETYKEAQAAMEGLNGQDMMGQPISVDWGFVRGPPKSKRRGGGRRRSRSPDRRRR</sequence>
<name>RBM8A_SALSA</name>
<dbReference type="EMBL" id="BT043746">
    <property type="protein sequence ID" value="ACH70861.1"/>
    <property type="molecule type" value="mRNA"/>
</dbReference>
<dbReference type="EMBL" id="BT057056">
    <property type="protein sequence ID" value="ACM08928.1"/>
    <property type="molecule type" value="mRNA"/>
</dbReference>
<dbReference type="EMBL" id="BT057535">
    <property type="protein sequence ID" value="ACM09407.1"/>
    <property type="molecule type" value="mRNA"/>
</dbReference>
<dbReference type="EMBL" id="BT060093">
    <property type="protein sequence ID" value="ACN12453.1"/>
    <property type="molecule type" value="mRNA"/>
</dbReference>
<dbReference type="RefSeq" id="NP_001135168.1">
    <property type="nucleotide sequence ID" value="NM_001141696.1"/>
</dbReference>
<dbReference type="RefSeq" id="XP_014019730.1">
    <property type="nucleotide sequence ID" value="XM_014164255.1"/>
</dbReference>
<dbReference type="RefSeq" id="XP_014019739.1">
    <property type="nucleotide sequence ID" value="XM_014164264.1"/>
</dbReference>
<dbReference type="RefSeq" id="XP_014056156.1">
    <property type="nucleotide sequence ID" value="XM_014200681.1"/>
</dbReference>
<dbReference type="SMR" id="B5DGI7"/>
<dbReference type="STRING" id="8030.ENSSSAP00000014327"/>
<dbReference type="PaxDb" id="8030-ENSSSAP00000014327"/>
<dbReference type="Ensembl" id="ENSSSAT00000180881">
    <property type="protein sequence ID" value="ENSSSAP00000154899"/>
    <property type="gene ID" value="ENSSSAG00000112907"/>
</dbReference>
<dbReference type="Ensembl" id="ENSSSAT00020135666">
    <property type="protein sequence ID" value="ENSSSAP00020103308"/>
    <property type="gene ID" value="ENSSSAG00020059965"/>
</dbReference>
<dbReference type="Ensembl" id="ENSSSAT00070038278">
    <property type="protein sequence ID" value="ENSSSAP00070036528"/>
    <property type="gene ID" value="ENSSSAG00070024011"/>
</dbReference>
<dbReference type="Ensembl" id="ENSSSAT00075126964">
    <property type="protein sequence ID" value="ENSSSAP00075094760"/>
    <property type="gene ID" value="ENSSSAG00075060161"/>
</dbReference>
<dbReference type="GeneID" id="100196667"/>
<dbReference type="GeneID" id="106581844"/>
<dbReference type="KEGG" id="sasa:100196667"/>
<dbReference type="KEGG" id="sasa:106581844"/>
<dbReference type="CTD" id="9939"/>
<dbReference type="OMA" id="KNMRAGR"/>
<dbReference type="OrthoDB" id="442508at7898"/>
<dbReference type="Proteomes" id="UP000087266">
    <property type="component" value="Chromosome ssa02"/>
</dbReference>
<dbReference type="Proteomes" id="UP000087266">
    <property type="component" value="Chromosome ssa05"/>
</dbReference>
<dbReference type="GO" id="GO:0005737">
    <property type="term" value="C:cytoplasm"/>
    <property type="evidence" value="ECO:0007669"/>
    <property type="project" value="UniProtKB-SubCell"/>
</dbReference>
<dbReference type="GO" id="GO:0016607">
    <property type="term" value="C:nuclear speck"/>
    <property type="evidence" value="ECO:0007669"/>
    <property type="project" value="UniProtKB-SubCell"/>
</dbReference>
<dbReference type="GO" id="GO:0005634">
    <property type="term" value="C:nucleus"/>
    <property type="evidence" value="ECO:0000250"/>
    <property type="project" value="UniProtKB"/>
</dbReference>
<dbReference type="GO" id="GO:0071006">
    <property type="term" value="C:U2-type catalytic step 1 spliceosome"/>
    <property type="evidence" value="ECO:0000250"/>
    <property type="project" value="UniProtKB"/>
</dbReference>
<dbReference type="GO" id="GO:0003729">
    <property type="term" value="F:mRNA binding"/>
    <property type="evidence" value="ECO:0007669"/>
    <property type="project" value="InterPro"/>
</dbReference>
<dbReference type="GO" id="GO:0000398">
    <property type="term" value="P:mRNA splicing, via spliceosome"/>
    <property type="evidence" value="ECO:0000250"/>
    <property type="project" value="UniProtKB"/>
</dbReference>
<dbReference type="GO" id="GO:0051028">
    <property type="term" value="P:mRNA transport"/>
    <property type="evidence" value="ECO:0007669"/>
    <property type="project" value="UniProtKB-KW"/>
</dbReference>
<dbReference type="GO" id="GO:0000184">
    <property type="term" value="P:nuclear-transcribed mRNA catabolic process, nonsense-mediated decay"/>
    <property type="evidence" value="ECO:0007669"/>
    <property type="project" value="UniProtKB-KW"/>
</dbReference>
<dbReference type="GO" id="GO:0000381">
    <property type="term" value="P:regulation of alternative mRNA splicing, via spliceosome"/>
    <property type="evidence" value="ECO:0000250"/>
    <property type="project" value="UniProtKB"/>
</dbReference>
<dbReference type="GO" id="GO:0006417">
    <property type="term" value="P:regulation of translation"/>
    <property type="evidence" value="ECO:0007669"/>
    <property type="project" value="UniProtKB-KW"/>
</dbReference>
<dbReference type="CDD" id="cd12324">
    <property type="entry name" value="RRM_RBM8"/>
    <property type="match status" value="1"/>
</dbReference>
<dbReference type="FunFam" id="3.30.70.330:FF:000157">
    <property type="entry name" value="RNA-binding protein 8A"/>
    <property type="match status" value="1"/>
</dbReference>
<dbReference type="Gene3D" id="3.30.70.330">
    <property type="match status" value="1"/>
</dbReference>
<dbReference type="InterPro" id="IPR012677">
    <property type="entry name" value="Nucleotide-bd_a/b_plait_sf"/>
</dbReference>
<dbReference type="InterPro" id="IPR035979">
    <property type="entry name" value="RBD_domain_sf"/>
</dbReference>
<dbReference type="InterPro" id="IPR008111">
    <property type="entry name" value="RNA-bd_8"/>
</dbReference>
<dbReference type="InterPro" id="IPR000504">
    <property type="entry name" value="RRM_dom"/>
</dbReference>
<dbReference type="InterPro" id="IPR033744">
    <property type="entry name" value="RRM_RBM8"/>
</dbReference>
<dbReference type="PANTHER" id="PTHR45894">
    <property type="entry name" value="RNA-BINDING PROTEIN 8A"/>
    <property type="match status" value="1"/>
</dbReference>
<dbReference type="Pfam" id="PF00076">
    <property type="entry name" value="RRM_1"/>
    <property type="match status" value="1"/>
</dbReference>
<dbReference type="PRINTS" id="PR01738">
    <property type="entry name" value="RNABINDINGM8"/>
</dbReference>
<dbReference type="SMART" id="SM00360">
    <property type="entry name" value="RRM"/>
    <property type="match status" value="1"/>
</dbReference>
<dbReference type="SUPFAM" id="SSF54928">
    <property type="entry name" value="RNA-binding domain, RBD"/>
    <property type="match status" value="1"/>
</dbReference>
<dbReference type="PROSITE" id="PS50102">
    <property type="entry name" value="RRM"/>
    <property type="match status" value="1"/>
</dbReference>
<reference key="1">
    <citation type="submission" date="2008-08" db="EMBL/GenBank/DDBJ databases">
        <title>Characterization of full-length sequenced inserts (FLIcs) from a salmo salar white muscle specific cDNA library.</title>
        <authorList>
            <person name="Andreassen R."/>
            <person name="Hoyheim B."/>
        </authorList>
    </citation>
    <scope>NUCLEOTIDE SEQUENCE [LARGE SCALE MRNA]</scope>
    <source>
        <tissue>White muscle</tissue>
    </source>
</reference>
<reference key="2">
    <citation type="journal article" date="2010" name="BMC Genomics">
        <title>Salmo salar and Esox lucius full-length cDNA sequences reveal changes in evolutionary pressures on a post-tetraploidization genome.</title>
        <authorList>
            <person name="Leong J.S."/>
            <person name="Jantzen S.G."/>
            <person name="von Schalburg K.R."/>
            <person name="Cooper G.A."/>
            <person name="Messmer A.M."/>
            <person name="Liao N.Y."/>
            <person name="Munro S."/>
            <person name="Moore R."/>
            <person name="Holt R.A."/>
            <person name="Jones S.J."/>
            <person name="Davidson W.S."/>
            <person name="Koop B.F."/>
        </authorList>
    </citation>
    <scope>NUCLEOTIDE SEQUENCE [LARGE SCALE MRNA]</scope>
    <source>
        <tissue>Thymus</tissue>
        <tissue>Thyroid</tissue>
    </source>
</reference>
<keyword id="KW-0963">Cytoplasm</keyword>
<keyword id="KW-0507">mRNA processing</keyword>
<keyword id="KW-0508">mRNA splicing</keyword>
<keyword id="KW-0509">mRNA transport</keyword>
<keyword id="KW-0866">Nonsense-mediated mRNA decay</keyword>
<keyword id="KW-0539">Nucleus</keyword>
<keyword id="KW-1185">Reference proteome</keyword>
<keyword id="KW-0694">RNA-binding</keyword>
<keyword id="KW-0747">Spliceosome</keyword>
<keyword id="KW-0810">Translation regulation</keyword>
<keyword id="KW-0813">Transport</keyword>
<feature type="chain" id="PRO_0000378565" description="RNA-binding protein 8A">
    <location>
        <begin position="1"/>
        <end position="175"/>
    </location>
</feature>
<feature type="domain" description="RRM" evidence="2">
    <location>
        <begin position="73"/>
        <end position="151"/>
    </location>
</feature>
<feature type="region of interest" description="Disordered" evidence="3">
    <location>
        <begin position="1"/>
        <end position="70"/>
    </location>
</feature>
<feature type="region of interest" description="Disordered" evidence="3">
    <location>
        <begin position="145"/>
        <end position="175"/>
    </location>
</feature>
<feature type="compositionally biased region" description="Basic and acidic residues" evidence="3">
    <location>
        <begin position="1"/>
        <end position="11"/>
    </location>
</feature>
<feature type="compositionally biased region" description="Basic residues" evidence="3">
    <location>
        <begin position="28"/>
        <end position="38"/>
    </location>
</feature>
<feature type="compositionally biased region" description="Basic and acidic residues" evidence="3">
    <location>
        <begin position="44"/>
        <end position="54"/>
    </location>
</feature>
<feature type="compositionally biased region" description="Basic residues" evidence="3">
    <location>
        <begin position="155"/>
        <end position="175"/>
    </location>
</feature>
<feature type="sequence conflict" description="In Ref. 2; ACM09407." evidence="4" ref="2">
    <location>
        <begin position="20"/>
        <end position="21"/>
    </location>
</feature>
<organism>
    <name type="scientific">Salmo salar</name>
    <name type="common">Atlantic salmon</name>
    <dbReference type="NCBI Taxonomy" id="8030"/>
    <lineage>
        <taxon>Eukaryota</taxon>
        <taxon>Metazoa</taxon>
        <taxon>Chordata</taxon>
        <taxon>Craniata</taxon>
        <taxon>Vertebrata</taxon>
        <taxon>Euteleostomi</taxon>
        <taxon>Actinopterygii</taxon>
        <taxon>Neopterygii</taxon>
        <taxon>Teleostei</taxon>
        <taxon>Protacanthopterygii</taxon>
        <taxon>Salmoniformes</taxon>
        <taxon>Salmonidae</taxon>
        <taxon>Salmoninae</taxon>
        <taxon>Salmo</taxon>
    </lineage>
</organism>
<protein>
    <recommendedName>
        <fullName>RNA-binding protein 8A</fullName>
    </recommendedName>
    <alternativeName>
        <fullName>RNA-binding motif protein 8A</fullName>
    </alternativeName>
    <alternativeName>
        <fullName>Ribonucleoprotein RBM8A</fullName>
    </alternativeName>
</protein>